<protein>
    <recommendedName>
        <fullName evidence="1">Alanine--tRNA ligase</fullName>
        <ecNumber evidence="1">6.1.1.7</ecNumber>
    </recommendedName>
    <alternativeName>
        <fullName evidence="1">Alanyl-tRNA synthetase</fullName>
        <shortName evidence="1">AlaRS</shortName>
    </alternativeName>
</protein>
<name>SYA_ECOK1</name>
<organism>
    <name type="scientific">Escherichia coli O1:K1 / APEC</name>
    <dbReference type="NCBI Taxonomy" id="405955"/>
    <lineage>
        <taxon>Bacteria</taxon>
        <taxon>Pseudomonadati</taxon>
        <taxon>Pseudomonadota</taxon>
        <taxon>Gammaproteobacteria</taxon>
        <taxon>Enterobacterales</taxon>
        <taxon>Enterobacteriaceae</taxon>
        <taxon>Escherichia</taxon>
    </lineage>
</organism>
<feature type="chain" id="PRO_0000347601" description="Alanine--tRNA ligase">
    <location>
        <begin position="1"/>
        <end position="876"/>
    </location>
</feature>
<feature type="binding site" evidence="1">
    <location>
        <position position="564"/>
    </location>
    <ligand>
        <name>Zn(2+)</name>
        <dbReference type="ChEBI" id="CHEBI:29105"/>
    </ligand>
</feature>
<feature type="binding site" evidence="1">
    <location>
        <position position="568"/>
    </location>
    <ligand>
        <name>Zn(2+)</name>
        <dbReference type="ChEBI" id="CHEBI:29105"/>
    </ligand>
</feature>
<feature type="binding site" evidence="1">
    <location>
        <position position="666"/>
    </location>
    <ligand>
        <name>Zn(2+)</name>
        <dbReference type="ChEBI" id="CHEBI:29105"/>
    </ligand>
</feature>
<feature type="binding site" evidence="1">
    <location>
        <position position="670"/>
    </location>
    <ligand>
        <name>Zn(2+)</name>
        <dbReference type="ChEBI" id="CHEBI:29105"/>
    </ligand>
</feature>
<feature type="modified residue" description="N6-acetyllysine" evidence="1">
    <location>
        <position position="74"/>
    </location>
</feature>
<accession>A1AEN7</accession>
<reference key="1">
    <citation type="journal article" date="2007" name="J. Bacteriol.">
        <title>The genome sequence of avian pathogenic Escherichia coli strain O1:K1:H7 shares strong similarities with human extraintestinal pathogenic E. coli genomes.</title>
        <authorList>
            <person name="Johnson T.J."/>
            <person name="Kariyawasam S."/>
            <person name="Wannemuehler Y."/>
            <person name="Mangiamele P."/>
            <person name="Johnson S.J."/>
            <person name="Doetkott C."/>
            <person name="Skyberg J.A."/>
            <person name="Lynne A.M."/>
            <person name="Johnson J.R."/>
            <person name="Nolan L.K."/>
        </authorList>
    </citation>
    <scope>NUCLEOTIDE SEQUENCE [LARGE SCALE GENOMIC DNA]</scope>
</reference>
<keyword id="KW-0007">Acetylation</keyword>
<keyword id="KW-0030">Aminoacyl-tRNA synthetase</keyword>
<keyword id="KW-0067">ATP-binding</keyword>
<keyword id="KW-0963">Cytoplasm</keyword>
<keyword id="KW-0436">Ligase</keyword>
<keyword id="KW-0479">Metal-binding</keyword>
<keyword id="KW-0547">Nucleotide-binding</keyword>
<keyword id="KW-0648">Protein biosynthesis</keyword>
<keyword id="KW-1185">Reference proteome</keyword>
<keyword id="KW-0694">RNA-binding</keyword>
<keyword id="KW-0820">tRNA-binding</keyword>
<keyword id="KW-0862">Zinc</keyword>
<dbReference type="EC" id="6.1.1.7" evidence="1"/>
<dbReference type="EMBL" id="CP000468">
    <property type="protein sequence ID" value="ABJ02127.1"/>
    <property type="molecule type" value="Genomic_DNA"/>
</dbReference>
<dbReference type="RefSeq" id="WP_000047209.1">
    <property type="nucleotide sequence ID" value="NZ_CADILS010000020.1"/>
</dbReference>
<dbReference type="SMR" id="A1AEN7"/>
<dbReference type="KEGG" id="ecv:APECO1_3829"/>
<dbReference type="HOGENOM" id="CLU_004485_1_1_6"/>
<dbReference type="Proteomes" id="UP000008216">
    <property type="component" value="Chromosome"/>
</dbReference>
<dbReference type="GO" id="GO:0005829">
    <property type="term" value="C:cytosol"/>
    <property type="evidence" value="ECO:0007669"/>
    <property type="project" value="TreeGrafter"/>
</dbReference>
<dbReference type="GO" id="GO:0004813">
    <property type="term" value="F:alanine-tRNA ligase activity"/>
    <property type="evidence" value="ECO:0007669"/>
    <property type="project" value="UniProtKB-UniRule"/>
</dbReference>
<dbReference type="GO" id="GO:0002161">
    <property type="term" value="F:aminoacyl-tRNA deacylase activity"/>
    <property type="evidence" value="ECO:0007669"/>
    <property type="project" value="TreeGrafter"/>
</dbReference>
<dbReference type="GO" id="GO:0005524">
    <property type="term" value="F:ATP binding"/>
    <property type="evidence" value="ECO:0007669"/>
    <property type="project" value="UniProtKB-UniRule"/>
</dbReference>
<dbReference type="GO" id="GO:0000049">
    <property type="term" value="F:tRNA binding"/>
    <property type="evidence" value="ECO:0007669"/>
    <property type="project" value="UniProtKB-KW"/>
</dbReference>
<dbReference type="GO" id="GO:0008270">
    <property type="term" value="F:zinc ion binding"/>
    <property type="evidence" value="ECO:0007669"/>
    <property type="project" value="UniProtKB-UniRule"/>
</dbReference>
<dbReference type="GO" id="GO:0006419">
    <property type="term" value="P:alanyl-tRNA aminoacylation"/>
    <property type="evidence" value="ECO:0007669"/>
    <property type="project" value="UniProtKB-UniRule"/>
</dbReference>
<dbReference type="GO" id="GO:0045892">
    <property type="term" value="P:negative regulation of DNA-templated transcription"/>
    <property type="evidence" value="ECO:0007669"/>
    <property type="project" value="TreeGrafter"/>
</dbReference>
<dbReference type="CDD" id="cd00673">
    <property type="entry name" value="AlaRS_core"/>
    <property type="match status" value="1"/>
</dbReference>
<dbReference type="FunFam" id="2.40.30.130:FF:000001">
    <property type="entry name" value="Alanine--tRNA ligase"/>
    <property type="match status" value="1"/>
</dbReference>
<dbReference type="FunFam" id="3.10.310.40:FF:000001">
    <property type="entry name" value="Alanine--tRNA ligase"/>
    <property type="match status" value="1"/>
</dbReference>
<dbReference type="FunFam" id="3.30.54.20:FF:000001">
    <property type="entry name" value="Alanine--tRNA ligase"/>
    <property type="match status" value="1"/>
</dbReference>
<dbReference type="FunFam" id="3.30.930.10:FF:000004">
    <property type="entry name" value="Alanine--tRNA ligase"/>
    <property type="match status" value="1"/>
</dbReference>
<dbReference type="FunFam" id="3.30.980.10:FF:000004">
    <property type="entry name" value="Alanine--tRNA ligase, cytoplasmic"/>
    <property type="match status" value="1"/>
</dbReference>
<dbReference type="Gene3D" id="2.40.30.130">
    <property type="match status" value="1"/>
</dbReference>
<dbReference type="Gene3D" id="3.10.310.40">
    <property type="match status" value="1"/>
</dbReference>
<dbReference type="Gene3D" id="3.30.54.20">
    <property type="match status" value="1"/>
</dbReference>
<dbReference type="Gene3D" id="6.10.250.550">
    <property type="match status" value="1"/>
</dbReference>
<dbReference type="Gene3D" id="3.30.930.10">
    <property type="entry name" value="Bira Bifunctional Protein, Domain 2"/>
    <property type="match status" value="1"/>
</dbReference>
<dbReference type="Gene3D" id="3.30.980.10">
    <property type="entry name" value="Threonyl-trna Synthetase, Chain A, domain 2"/>
    <property type="match status" value="1"/>
</dbReference>
<dbReference type="HAMAP" id="MF_00036_B">
    <property type="entry name" value="Ala_tRNA_synth_B"/>
    <property type="match status" value="1"/>
</dbReference>
<dbReference type="InterPro" id="IPR045864">
    <property type="entry name" value="aa-tRNA-synth_II/BPL/LPL"/>
</dbReference>
<dbReference type="InterPro" id="IPR002318">
    <property type="entry name" value="Ala-tRNA-lgiase_IIc"/>
</dbReference>
<dbReference type="InterPro" id="IPR018162">
    <property type="entry name" value="Ala-tRNA-ligase_IIc_anticod-bd"/>
</dbReference>
<dbReference type="InterPro" id="IPR018165">
    <property type="entry name" value="Ala-tRNA-synth_IIc_core"/>
</dbReference>
<dbReference type="InterPro" id="IPR018164">
    <property type="entry name" value="Ala-tRNA-synth_IIc_N"/>
</dbReference>
<dbReference type="InterPro" id="IPR050058">
    <property type="entry name" value="Ala-tRNA_ligase"/>
</dbReference>
<dbReference type="InterPro" id="IPR023033">
    <property type="entry name" value="Ala_tRNA_ligase_euk/bac"/>
</dbReference>
<dbReference type="InterPro" id="IPR003156">
    <property type="entry name" value="DHHA1_dom"/>
</dbReference>
<dbReference type="InterPro" id="IPR018163">
    <property type="entry name" value="Thr/Ala-tRNA-synth_IIc_edit"/>
</dbReference>
<dbReference type="InterPro" id="IPR009000">
    <property type="entry name" value="Transl_B-barrel_sf"/>
</dbReference>
<dbReference type="InterPro" id="IPR012947">
    <property type="entry name" value="tRNA_SAD"/>
</dbReference>
<dbReference type="NCBIfam" id="TIGR00344">
    <property type="entry name" value="alaS"/>
    <property type="match status" value="1"/>
</dbReference>
<dbReference type="PANTHER" id="PTHR11777:SF9">
    <property type="entry name" value="ALANINE--TRNA LIGASE, CYTOPLASMIC"/>
    <property type="match status" value="1"/>
</dbReference>
<dbReference type="PANTHER" id="PTHR11777">
    <property type="entry name" value="ALANYL-TRNA SYNTHETASE"/>
    <property type="match status" value="1"/>
</dbReference>
<dbReference type="Pfam" id="PF02272">
    <property type="entry name" value="DHHA1"/>
    <property type="match status" value="1"/>
</dbReference>
<dbReference type="Pfam" id="PF01411">
    <property type="entry name" value="tRNA-synt_2c"/>
    <property type="match status" value="1"/>
</dbReference>
<dbReference type="Pfam" id="PF07973">
    <property type="entry name" value="tRNA_SAD"/>
    <property type="match status" value="1"/>
</dbReference>
<dbReference type="PRINTS" id="PR00980">
    <property type="entry name" value="TRNASYNTHALA"/>
</dbReference>
<dbReference type="SMART" id="SM00863">
    <property type="entry name" value="tRNA_SAD"/>
    <property type="match status" value="1"/>
</dbReference>
<dbReference type="SUPFAM" id="SSF55681">
    <property type="entry name" value="Class II aaRS and biotin synthetases"/>
    <property type="match status" value="1"/>
</dbReference>
<dbReference type="SUPFAM" id="SSF101353">
    <property type="entry name" value="Putative anticodon-binding domain of alanyl-tRNA synthetase (AlaRS)"/>
    <property type="match status" value="1"/>
</dbReference>
<dbReference type="SUPFAM" id="SSF55186">
    <property type="entry name" value="ThrRS/AlaRS common domain"/>
    <property type="match status" value="1"/>
</dbReference>
<dbReference type="SUPFAM" id="SSF50447">
    <property type="entry name" value="Translation proteins"/>
    <property type="match status" value="1"/>
</dbReference>
<dbReference type="PROSITE" id="PS50860">
    <property type="entry name" value="AA_TRNA_LIGASE_II_ALA"/>
    <property type="match status" value="1"/>
</dbReference>
<proteinExistence type="inferred from homology"/>
<gene>
    <name evidence="1" type="primary">alaS</name>
    <name type="ordered locus">Ecok1_26330</name>
    <name type="ORF">APECO1_3829</name>
</gene>
<sequence length="876" mass="95933">MSKSTAEIRQAFLDFFHSKGHQVVASSSLVPHNDPTLLFTNAGMNQFKDVFLGLDKRNYSRATTSQRCVRAGGKHNDLENVGYTARHHTFFEMLGNFSFGDYFKHDAIQFAWELLTSEKWFALPKERLWVTVYESDDEAYEIWEKEVGIPRERIIRIGDNKGAPYASDNFWQMGDTGPCGPCTEIFYDHGDHIWGGPPGSPEEDGDRYIEIWNIVFMQFNRQADGTMEPLPKPSVDTGMGLERIAAVLQHVNSNYDIDLFRTLIQAVAKVTGATDLSNKSLRVIADHIRSCAFLIADGVMPSNESRGYVLRRIIRRAVRHGNMLGAKETFFYKLVGPLIDVMGSAGEDLKRQQAQVEQVLKTEEEQFARTLERGLALLDEELAKLSGDTLDGETAFRLYDTYGFPVDLTADVCRERNIKVDEAGFDAAMEEQRRRAREASGFGADYNAMIRVDSASEFKGYDHLELNGKVTALFVDGKAVDAINAGQEAVVVLDQTPFYAESGGQVGDKGELKGANFSFAVEDTQKYGQAIGHIGKLAAGSLKVGDAVQADVDEARRARIRLNHSATHLMHAALRQVLGTHVSQKGSLVNDKVLRFDFSHNEAMKPEEIRAVEDLVNAQIRRNLPIETNIMDLEAAKAKGAMALFGEKYDERVRVLSMGDFSTELCGGTHASRTGDIGLFRIISESGTAAGVRRIEAVTGEGAIATVHADSDRLSEVAHLLKGDSNNLADKVRSVLERTRQLEKELQQLKEQAAAQESANLSSKAIDVNGVKLLVSELSGVEPKMLRTMVDDLKNQLGSTIIVLATVAEGKVSLIAGVSKDVTDRVKAGELIGMVAQQVGGKGGGRPDMAQAGGTDAAALPAALASVKGWVSAKLQ</sequence>
<comment type="function">
    <text evidence="1">Catalyzes the attachment of alanine to tRNA(Ala) in a two-step reaction: alanine is first activated by ATP to form Ala-AMP and then transferred to the acceptor end of tRNA(Ala). Also edits incorrectly charged Ser-tRNA(Ala) and Gly-tRNA(Ala) via its editing domain.</text>
</comment>
<comment type="catalytic activity">
    <reaction evidence="1">
        <text>tRNA(Ala) + L-alanine + ATP = L-alanyl-tRNA(Ala) + AMP + diphosphate</text>
        <dbReference type="Rhea" id="RHEA:12540"/>
        <dbReference type="Rhea" id="RHEA-COMP:9657"/>
        <dbReference type="Rhea" id="RHEA-COMP:9923"/>
        <dbReference type="ChEBI" id="CHEBI:30616"/>
        <dbReference type="ChEBI" id="CHEBI:33019"/>
        <dbReference type="ChEBI" id="CHEBI:57972"/>
        <dbReference type="ChEBI" id="CHEBI:78442"/>
        <dbReference type="ChEBI" id="CHEBI:78497"/>
        <dbReference type="ChEBI" id="CHEBI:456215"/>
        <dbReference type="EC" id="6.1.1.7"/>
    </reaction>
</comment>
<comment type="cofactor">
    <cofactor evidence="1">
        <name>Zn(2+)</name>
        <dbReference type="ChEBI" id="CHEBI:29105"/>
    </cofactor>
    <text evidence="1">Binds 1 zinc ion per subunit.</text>
</comment>
<comment type="subunit">
    <text evidence="1">Homotetramer.</text>
</comment>
<comment type="subcellular location">
    <subcellularLocation>
        <location evidence="1">Cytoplasm</location>
    </subcellularLocation>
</comment>
<comment type="domain">
    <text evidence="1">Consists of three domains; the N-terminal catalytic domain, the editing domain and the C-terminal C-Ala domain. The editing domain removes incorrectly charged amino acids, while the C-Ala domain, along with tRNA(Ala), serves as a bridge to cooperatively bring together the editing and aminoacylation centers thus stimulating deacylation of misacylated tRNAs.</text>
</comment>
<comment type="similarity">
    <text evidence="1">Belongs to the class-II aminoacyl-tRNA synthetase family.</text>
</comment>
<evidence type="ECO:0000255" key="1">
    <source>
        <dbReference type="HAMAP-Rule" id="MF_00036"/>
    </source>
</evidence>